<protein>
    <recommendedName>
        <fullName>Acidic phospholipase A2 2</fullName>
        <shortName>svPLA2</shortName>
        <ecNumber>3.1.1.4</ecNumber>
    </recommendedName>
    <alternativeName>
        <fullName>Phosphatidylcholine 2-acylhydrolase</fullName>
    </alternativeName>
</protein>
<proteinExistence type="evidence at protein level"/>
<sequence>SNRPMPLNRWQFKNMISCTVPSRSWWDFADYGCYCGRGGSGTPVDDLDRCCQVHDNCYNEAEKISGCNPRFRTYSYECTAGTLTCTGRNNACAASVCDCDRLAAICFAGAPYNDNNYNIDLQARCN</sequence>
<feature type="propeptide" id="PRO_0000022926">
    <location>
        <begin position="1" status="less than"/>
        <end position="7"/>
    </location>
</feature>
<feature type="chain" id="PRO_0000022927" description="Acidic phospholipase A2 2">
    <location>
        <begin position="8"/>
        <end position="126"/>
    </location>
</feature>
<feature type="active site" evidence="1">
    <location>
        <position position="54"/>
    </location>
</feature>
<feature type="active site" evidence="1">
    <location>
        <position position="100"/>
    </location>
</feature>
<feature type="binding site" evidence="4 7">
    <location>
        <position position="34"/>
    </location>
    <ligand>
        <name>Ca(2+)</name>
        <dbReference type="ChEBI" id="CHEBI:29108"/>
    </ligand>
</feature>
<feature type="binding site" evidence="4 7">
    <location>
        <position position="36"/>
    </location>
    <ligand>
        <name>Ca(2+)</name>
        <dbReference type="ChEBI" id="CHEBI:29108"/>
    </ligand>
</feature>
<feature type="binding site" evidence="4 7">
    <location>
        <position position="38"/>
    </location>
    <ligand>
        <name>Ca(2+)</name>
        <dbReference type="ChEBI" id="CHEBI:29108"/>
    </ligand>
</feature>
<feature type="binding site" evidence="4 7">
    <location>
        <position position="55"/>
    </location>
    <ligand>
        <name>Ca(2+)</name>
        <dbReference type="ChEBI" id="CHEBI:29108"/>
    </ligand>
</feature>
<feature type="disulfide bond" evidence="4 7">
    <location>
        <begin position="18"/>
        <end position="78"/>
    </location>
</feature>
<feature type="disulfide bond" evidence="4 7">
    <location>
        <begin position="33"/>
        <end position="125"/>
    </location>
</feature>
<feature type="disulfide bond" evidence="4 7">
    <location>
        <begin position="35"/>
        <end position="51"/>
    </location>
</feature>
<feature type="disulfide bond" evidence="4 7">
    <location>
        <begin position="50"/>
        <end position="106"/>
    </location>
</feature>
<feature type="disulfide bond" evidence="4 7">
    <location>
        <begin position="57"/>
        <end position="99"/>
    </location>
</feature>
<feature type="disulfide bond" evidence="4 7">
    <location>
        <begin position="67"/>
        <end position="92"/>
    </location>
</feature>
<feature type="disulfide bond" evidence="4 7">
    <location>
        <begin position="85"/>
        <end position="97"/>
    </location>
</feature>
<feature type="non-terminal residue">
    <location>
        <position position="1"/>
    </location>
</feature>
<feature type="helix" evidence="8">
    <location>
        <begin position="9"/>
        <end position="19"/>
    </location>
</feature>
<feature type="helix" evidence="8">
    <location>
        <begin position="25"/>
        <end position="28"/>
    </location>
</feature>
<feature type="strand" evidence="8">
    <location>
        <begin position="29"/>
        <end position="31"/>
    </location>
</feature>
<feature type="turn" evidence="8">
    <location>
        <begin position="32"/>
        <end position="34"/>
    </location>
</feature>
<feature type="strand" evidence="8">
    <location>
        <begin position="35"/>
        <end position="37"/>
    </location>
</feature>
<feature type="helix" evidence="8">
    <location>
        <begin position="46"/>
        <end position="61"/>
    </location>
</feature>
<feature type="turn" evidence="8">
    <location>
        <begin position="69"/>
        <end position="71"/>
    </location>
</feature>
<feature type="strand" evidence="8">
    <location>
        <begin position="76"/>
        <end position="79"/>
    </location>
</feature>
<feature type="strand" evidence="8">
    <location>
        <begin position="82"/>
        <end position="85"/>
    </location>
</feature>
<feature type="helix" evidence="8">
    <location>
        <begin position="91"/>
        <end position="109"/>
    </location>
</feature>
<feature type="helix" evidence="8">
    <location>
        <begin position="114"/>
        <end position="116"/>
    </location>
</feature>
<feature type="helix" evidence="8">
    <location>
        <begin position="121"/>
        <end position="124"/>
    </location>
</feature>
<keyword id="KW-0002">3D-structure</keyword>
<keyword id="KW-0106">Calcium</keyword>
<keyword id="KW-1015">Disulfide bond</keyword>
<keyword id="KW-0378">Hydrolase</keyword>
<keyword id="KW-0442">Lipid degradation</keyword>
<keyword id="KW-0443">Lipid metabolism</keyword>
<keyword id="KW-0479">Metal-binding</keyword>
<keyword id="KW-0964">Secreted</keyword>
<name>PA2A2_NAJSG</name>
<comment type="function">
    <text>PLA2 catalyzes the calcium-dependent hydrolysis of the 2-acyl groups in 3-sn-phosphoglycerides.</text>
</comment>
<comment type="catalytic activity">
    <reaction evidence="2 3">
        <text>a 1,2-diacyl-sn-glycero-3-phosphocholine + H2O = a 1-acyl-sn-glycero-3-phosphocholine + a fatty acid + H(+)</text>
        <dbReference type="Rhea" id="RHEA:15801"/>
        <dbReference type="ChEBI" id="CHEBI:15377"/>
        <dbReference type="ChEBI" id="CHEBI:15378"/>
        <dbReference type="ChEBI" id="CHEBI:28868"/>
        <dbReference type="ChEBI" id="CHEBI:57643"/>
        <dbReference type="ChEBI" id="CHEBI:58168"/>
        <dbReference type="EC" id="3.1.1.4"/>
    </reaction>
</comment>
<comment type="cofactor">
    <cofactor evidence="6">
        <name>Ca(2+)</name>
        <dbReference type="ChEBI" id="CHEBI:29108"/>
    </cofactor>
    <text evidence="6">Binds 1 Ca(2+) ion.</text>
</comment>
<comment type="subunit">
    <text evidence="4">Heterodimer formed between two homologous isoforms: isoform 1 and isoform 2.</text>
</comment>
<comment type="subcellular location">
    <subcellularLocation>
        <location>Secreted</location>
    </subcellularLocation>
</comment>
<comment type="tissue specificity">
    <text>Expressed by the venom gland.</text>
</comment>
<comment type="similarity">
    <text evidence="5">Belongs to the phospholipase A2 family. Group I subfamily. D49 sub-subfamily.</text>
</comment>
<reference key="1">
    <citation type="submission" date="2003-09" db="EMBL/GenBank/DDBJ databases">
        <title>Phospholipase A2 isoform from Indian cobra.</title>
        <authorList>
            <person name="Paramasivam M."/>
            <person name="Saravanan K."/>
            <person name="Hariprasad R.G."/>
            <person name="Jabeen T."/>
            <person name="Sharma S."/>
            <person name="Singh T.P."/>
            <person name="Srinivasan A."/>
        </authorList>
    </citation>
    <scope>NUCLEOTIDE SEQUENCE [MRNA]</scope>
    <source>
        <tissue>Venom gland</tissue>
    </source>
</reference>
<reference key="2">
    <citation type="journal article" date="2005" name="Proteins">
        <title>Crystal structure of a calcium-induced dimer of two isoforms of cobra phospholipase A2 at 1.6 A resolution.</title>
        <authorList>
            <person name="Jabeen T."/>
            <person name="Sharma S."/>
            <person name="Singh N."/>
            <person name="Singh R.K."/>
            <person name="Kaur P."/>
            <person name="Perbandt M."/>
            <person name="Betzel C."/>
            <person name="Srinivasan A."/>
            <person name="Singh T.P."/>
        </authorList>
    </citation>
    <scope>X-RAY CRYSTALLOGRAPHY (1.60 ANGSTROMS) OF 8-126 IN COMPLEX WITH ISOFORM 1 AND CALCIUM ION</scope>
    <scope>COFACTOR</scope>
    <scope>DISULFIDE BONDS</scope>
</reference>
<accession>P60044</accession>
<dbReference type="EC" id="3.1.1.4"/>
<dbReference type="EMBL" id="AY422776">
    <property type="protein sequence ID" value="AAR00254.1"/>
    <property type="molecule type" value="mRNA"/>
</dbReference>
<dbReference type="PDB" id="1MH2">
    <property type="method" value="X-ray"/>
    <property type="resolution" value="2.70 A"/>
    <property type="chains" value="B=8-126"/>
</dbReference>
<dbReference type="PDB" id="1S6B">
    <property type="method" value="X-ray"/>
    <property type="resolution" value="1.60 A"/>
    <property type="chains" value="B=8-126"/>
</dbReference>
<dbReference type="PDB" id="1XXW">
    <property type="method" value="X-ray"/>
    <property type="resolution" value="2.70 A"/>
    <property type="chains" value="B=8-125"/>
</dbReference>
<dbReference type="PDB" id="2RD4">
    <property type="method" value="X-ray"/>
    <property type="resolution" value="2.97 A"/>
    <property type="chains" value="B=8-126"/>
</dbReference>
<dbReference type="PDBsum" id="1MH2"/>
<dbReference type="PDBsum" id="1S6B"/>
<dbReference type="PDBsum" id="1XXW"/>
<dbReference type="PDBsum" id="2RD4"/>
<dbReference type="SMR" id="P60044"/>
<dbReference type="EvolutionaryTrace" id="P60044"/>
<dbReference type="GO" id="GO:0005576">
    <property type="term" value="C:extracellular region"/>
    <property type="evidence" value="ECO:0007669"/>
    <property type="project" value="UniProtKB-SubCell"/>
</dbReference>
<dbReference type="GO" id="GO:0005509">
    <property type="term" value="F:calcium ion binding"/>
    <property type="evidence" value="ECO:0007669"/>
    <property type="project" value="InterPro"/>
</dbReference>
<dbReference type="GO" id="GO:0047498">
    <property type="term" value="F:calcium-dependent phospholipase A2 activity"/>
    <property type="evidence" value="ECO:0007669"/>
    <property type="project" value="TreeGrafter"/>
</dbReference>
<dbReference type="GO" id="GO:0005543">
    <property type="term" value="F:phospholipid binding"/>
    <property type="evidence" value="ECO:0007669"/>
    <property type="project" value="TreeGrafter"/>
</dbReference>
<dbReference type="GO" id="GO:0005102">
    <property type="term" value="F:signaling receptor binding"/>
    <property type="evidence" value="ECO:0007669"/>
    <property type="project" value="TreeGrafter"/>
</dbReference>
<dbReference type="GO" id="GO:0050482">
    <property type="term" value="P:arachidonate secretion"/>
    <property type="evidence" value="ECO:0007669"/>
    <property type="project" value="InterPro"/>
</dbReference>
<dbReference type="GO" id="GO:0006633">
    <property type="term" value="P:fatty acid biosynthetic process"/>
    <property type="evidence" value="ECO:0007669"/>
    <property type="project" value="TreeGrafter"/>
</dbReference>
<dbReference type="GO" id="GO:0016042">
    <property type="term" value="P:lipid catabolic process"/>
    <property type="evidence" value="ECO:0007669"/>
    <property type="project" value="UniProtKB-KW"/>
</dbReference>
<dbReference type="GO" id="GO:0006644">
    <property type="term" value="P:phospholipid metabolic process"/>
    <property type="evidence" value="ECO:0007669"/>
    <property type="project" value="InterPro"/>
</dbReference>
<dbReference type="GO" id="GO:0048146">
    <property type="term" value="P:positive regulation of fibroblast proliferation"/>
    <property type="evidence" value="ECO:0007669"/>
    <property type="project" value="TreeGrafter"/>
</dbReference>
<dbReference type="CDD" id="cd00125">
    <property type="entry name" value="PLA2c"/>
    <property type="match status" value="1"/>
</dbReference>
<dbReference type="FunFam" id="1.20.90.10:FF:000007">
    <property type="entry name" value="Acidic phospholipase A2"/>
    <property type="match status" value="1"/>
</dbReference>
<dbReference type="Gene3D" id="1.20.90.10">
    <property type="entry name" value="Phospholipase A2 domain"/>
    <property type="match status" value="1"/>
</dbReference>
<dbReference type="InterPro" id="IPR001211">
    <property type="entry name" value="PLipase_A2"/>
</dbReference>
<dbReference type="InterPro" id="IPR033112">
    <property type="entry name" value="PLipase_A2_Asp_AS"/>
</dbReference>
<dbReference type="InterPro" id="IPR016090">
    <property type="entry name" value="PLipase_A2_dom"/>
</dbReference>
<dbReference type="InterPro" id="IPR036444">
    <property type="entry name" value="PLipase_A2_dom_sf"/>
</dbReference>
<dbReference type="InterPro" id="IPR033113">
    <property type="entry name" value="PLipase_A2_His_AS"/>
</dbReference>
<dbReference type="PANTHER" id="PTHR11716:SF94">
    <property type="entry name" value="PHOSPHOLIPASE A2"/>
    <property type="match status" value="1"/>
</dbReference>
<dbReference type="PANTHER" id="PTHR11716">
    <property type="entry name" value="PHOSPHOLIPASE A2 FAMILY MEMBER"/>
    <property type="match status" value="1"/>
</dbReference>
<dbReference type="Pfam" id="PF00068">
    <property type="entry name" value="Phospholip_A2_1"/>
    <property type="match status" value="1"/>
</dbReference>
<dbReference type="PRINTS" id="PR00389">
    <property type="entry name" value="PHPHLIPASEA2"/>
</dbReference>
<dbReference type="SMART" id="SM00085">
    <property type="entry name" value="PA2c"/>
    <property type="match status" value="1"/>
</dbReference>
<dbReference type="SUPFAM" id="SSF48619">
    <property type="entry name" value="Phospholipase A2, PLA2"/>
    <property type="match status" value="1"/>
</dbReference>
<dbReference type="PROSITE" id="PS00119">
    <property type="entry name" value="PA2_ASP"/>
    <property type="match status" value="1"/>
</dbReference>
<dbReference type="PROSITE" id="PS00118">
    <property type="entry name" value="PA2_HIS"/>
    <property type="match status" value="1"/>
</dbReference>
<organism>
    <name type="scientific">Naja sagittifera</name>
    <name type="common">Andaman cobra</name>
    <dbReference type="NCBI Taxonomy" id="195058"/>
    <lineage>
        <taxon>Eukaryota</taxon>
        <taxon>Metazoa</taxon>
        <taxon>Chordata</taxon>
        <taxon>Craniata</taxon>
        <taxon>Vertebrata</taxon>
        <taxon>Euteleostomi</taxon>
        <taxon>Lepidosauria</taxon>
        <taxon>Squamata</taxon>
        <taxon>Bifurcata</taxon>
        <taxon>Unidentata</taxon>
        <taxon>Episquamata</taxon>
        <taxon>Toxicofera</taxon>
        <taxon>Serpentes</taxon>
        <taxon>Colubroidea</taxon>
        <taxon>Elapidae</taxon>
        <taxon>Elapinae</taxon>
        <taxon>Naja</taxon>
    </lineage>
</organism>
<evidence type="ECO:0000250" key="1">
    <source>
        <dbReference type="UniProtKB" id="P14418"/>
    </source>
</evidence>
<evidence type="ECO:0000255" key="2">
    <source>
        <dbReference type="PROSITE-ProRule" id="PRU10035"/>
    </source>
</evidence>
<evidence type="ECO:0000255" key="3">
    <source>
        <dbReference type="PROSITE-ProRule" id="PRU10036"/>
    </source>
</evidence>
<evidence type="ECO:0000269" key="4">
    <source>
    </source>
</evidence>
<evidence type="ECO:0000305" key="5"/>
<evidence type="ECO:0000305" key="6">
    <source>
    </source>
</evidence>
<evidence type="ECO:0007744" key="7">
    <source>
        <dbReference type="PDB" id="1S6B"/>
    </source>
</evidence>
<evidence type="ECO:0007829" key="8">
    <source>
        <dbReference type="PDB" id="1S6B"/>
    </source>
</evidence>